<evidence type="ECO:0000255" key="1">
    <source>
        <dbReference type="HAMAP-Rule" id="MF_01576"/>
    </source>
</evidence>
<reference key="1">
    <citation type="journal article" date="1999" name="Nat. Genet.">
        <title>Comparative genomes of Chlamydia pneumoniae and C. trachomatis.</title>
        <authorList>
            <person name="Kalman S."/>
            <person name="Mitchell W.P."/>
            <person name="Marathe R."/>
            <person name="Lammel C.J."/>
            <person name="Fan J."/>
            <person name="Hyman R.W."/>
            <person name="Olinger L."/>
            <person name="Grimwood J."/>
            <person name="Davis R.W."/>
            <person name="Stephens R.S."/>
        </authorList>
    </citation>
    <scope>NUCLEOTIDE SEQUENCE [LARGE SCALE GENOMIC DNA]</scope>
    <source>
        <strain>CWL029</strain>
    </source>
</reference>
<reference key="2">
    <citation type="journal article" date="2000" name="Nucleic Acids Res.">
        <title>Genome sequences of Chlamydia trachomatis MoPn and Chlamydia pneumoniae AR39.</title>
        <authorList>
            <person name="Read T.D."/>
            <person name="Brunham R.C."/>
            <person name="Shen C."/>
            <person name="Gill S.R."/>
            <person name="Heidelberg J.F."/>
            <person name="White O."/>
            <person name="Hickey E.K."/>
            <person name="Peterson J.D."/>
            <person name="Utterback T.R."/>
            <person name="Berry K.J."/>
            <person name="Bass S."/>
            <person name="Linher K.D."/>
            <person name="Weidman J.F."/>
            <person name="Khouri H.M."/>
            <person name="Craven B."/>
            <person name="Bowman C."/>
            <person name="Dodson R.J."/>
            <person name="Gwinn M.L."/>
            <person name="Nelson W.C."/>
            <person name="DeBoy R.T."/>
            <person name="Kolonay J.F."/>
            <person name="McClarty G."/>
            <person name="Salzberg S.L."/>
            <person name="Eisen J.A."/>
            <person name="Fraser C.M."/>
        </authorList>
    </citation>
    <scope>NUCLEOTIDE SEQUENCE [LARGE SCALE GENOMIC DNA]</scope>
    <source>
        <strain>AR39</strain>
    </source>
</reference>
<reference key="3">
    <citation type="journal article" date="2000" name="Nucleic Acids Res.">
        <title>Comparison of whole genome sequences of Chlamydia pneumoniae J138 from Japan and CWL029 from USA.</title>
        <authorList>
            <person name="Shirai M."/>
            <person name="Hirakawa H."/>
            <person name="Kimoto M."/>
            <person name="Tabuchi M."/>
            <person name="Kishi F."/>
            <person name="Ouchi K."/>
            <person name="Shiba T."/>
            <person name="Ishii K."/>
            <person name="Hattori M."/>
            <person name="Kuhara S."/>
            <person name="Nakazawa T."/>
        </authorList>
    </citation>
    <scope>NUCLEOTIDE SEQUENCE [LARGE SCALE GENOMIC DNA]</scope>
    <source>
        <strain>J138</strain>
    </source>
</reference>
<reference key="4">
    <citation type="submission" date="2002-05" db="EMBL/GenBank/DDBJ databases">
        <title>The genome sequence of Chlamydia pneumoniae TW183 and comparison with other Chlamydia strains based on whole genome sequence analysis.</title>
        <authorList>
            <person name="Geng M.M."/>
            <person name="Schuhmacher A."/>
            <person name="Muehldorfer I."/>
            <person name="Bensch K.W."/>
            <person name="Schaefer K.P."/>
            <person name="Schneider S."/>
            <person name="Pohl T."/>
            <person name="Essig A."/>
            <person name="Marre R."/>
            <person name="Melchers K."/>
        </authorList>
    </citation>
    <scope>NUCLEOTIDE SEQUENCE [LARGE SCALE GENOMIC DNA]</scope>
    <source>
        <strain>TW-183</strain>
    </source>
</reference>
<accession>Q9Z8K3</accession>
<dbReference type="EC" id="1.5.1.5" evidence="1"/>
<dbReference type="EC" id="3.5.4.9" evidence="1"/>
<dbReference type="EMBL" id="AE001363">
    <property type="protein sequence ID" value="AAD18484.1"/>
    <property type="molecule type" value="Genomic_DNA"/>
</dbReference>
<dbReference type="EMBL" id="AE002161">
    <property type="protein sequence ID" value="AAF38266.1"/>
    <property type="molecule type" value="Genomic_DNA"/>
</dbReference>
<dbReference type="EMBL" id="BA000008">
    <property type="protein sequence ID" value="BAA98545.1"/>
    <property type="molecule type" value="Genomic_DNA"/>
</dbReference>
<dbReference type="EMBL" id="AE009440">
    <property type="protein sequence ID" value="AAP98277.1"/>
    <property type="molecule type" value="Genomic_DNA"/>
</dbReference>
<dbReference type="PIR" id="E72090">
    <property type="entry name" value="E72090"/>
</dbReference>
<dbReference type="PIR" id="G86532">
    <property type="entry name" value="G86532"/>
</dbReference>
<dbReference type="RefSeq" id="NP_224540.1">
    <property type="nucleotide sequence ID" value="NC_000922.1"/>
</dbReference>
<dbReference type="RefSeq" id="WP_010882983.1">
    <property type="nucleotide sequence ID" value="NZ_LN847257.1"/>
</dbReference>
<dbReference type="SMR" id="Q9Z8K3"/>
<dbReference type="STRING" id="406984.CPK_ORF00844"/>
<dbReference type="GeneID" id="45050383"/>
<dbReference type="KEGG" id="cpa:CP_0423"/>
<dbReference type="KEGG" id="cpj:folD"/>
<dbReference type="KEGG" id="cpn:CPn_0335"/>
<dbReference type="KEGG" id="cpt:CpB0344"/>
<dbReference type="PATRIC" id="fig|115713.3.peg.370"/>
<dbReference type="eggNOG" id="COG0190">
    <property type="taxonomic scope" value="Bacteria"/>
</dbReference>
<dbReference type="HOGENOM" id="CLU_034045_2_0_0"/>
<dbReference type="OrthoDB" id="9803580at2"/>
<dbReference type="UniPathway" id="UPA00193"/>
<dbReference type="Proteomes" id="UP000000583">
    <property type="component" value="Chromosome"/>
</dbReference>
<dbReference type="Proteomes" id="UP000000801">
    <property type="component" value="Chromosome"/>
</dbReference>
<dbReference type="GO" id="GO:0005829">
    <property type="term" value="C:cytosol"/>
    <property type="evidence" value="ECO:0007669"/>
    <property type="project" value="TreeGrafter"/>
</dbReference>
<dbReference type="GO" id="GO:0004477">
    <property type="term" value="F:methenyltetrahydrofolate cyclohydrolase activity"/>
    <property type="evidence" value="ECO:0007669"/>
    <property type="project" value="UniProtKB-UniRule"/>
</dbReference>
<dbReference type="GO" id="GO:0004488">
    <property type="term" value="F:methylenetetrahydrofolate dehydrogenase (NADP+) activity"/>
    <property type="evidence" value="ECO:0007669"/>
    <property type="project" value="UniProtKB-UniRule"/>
</dbReference>
<dbReference type="GO" id="GO:0000105">
    <property type="term" value="P:L-histidine biosynthetic process"/>
    <property type="evidence" value="ECO:0007669"/>
    <property type="project" value="UniProtKB-KW"/>
</dbReference>
<dbReference type="GO" id="GO:0009086">
    <property type="term" value="P:methionine biosynthetic process"/>
    <property type="evidence" value="ECO:0007669"/>
    <property type="project" value="UniProtKB-KW"/>
</dbReference>
<dbReference type="GO" id="GO:0006164">
    <property type="term" value="P:purine nucleotide biosynthetic process"/>
    <property type="evidence" value="ECO:0007669"/>
    <property type="project" value="UniProtKB-KW"/>
</dbReference>
<dbReference type="GO" id="GO:0035999">
    <property type="term" value="P:tetrahydrofolate interconversion"/>
    <property type="evidence" value="ECO:0007669"/>
    <property type="project" value="UniProtKB-UniRule"/>
</dbReference>
<dbReference type="CDD" id="cd01080">
    <property type="entry name" value="NAD_bind_m-THF_DH_Cyclohyd"/>
    <property type="match status" value="1"/>
</dbReference>
<dbReference type="FunFam" id="3.40.50.720:FF:000189">
    <property type="entry name" value="Bifunctional protein FolD"/>
    <property type="match status" value="1"/>
</dbReference>
<dbReference type="FunFam" id="3.40.50.10860:FF:000005">
    <property type="entry name" value="C-1-tetrahydrofolate synthase, cytoplasmic, putative"/>
    <property type="match status" value="1"/>
</dbReference>
<dbReference type="Gene3D" id="3.40.50.10860">
    <property type="entry name" value="Leucine Dehydrogenase, chain A, domain 1"/>
    <property type="match status" value="1"/>
</dbReference>
<dbReference type="Gene3D" id="3.40.50.720">
    <property type="entry name" value="NAD(P)-binding Rossmann-like Domain"/>
    <property type="match status" value="1"/>
</dbReference>
<dbReference type="HAMAP" id="MF_01576">
    <property type="entry name" value="THF_DHG_CYH"/>
    <property type="match status" value="1"/>
</dbReference>
<dbReference type="InterPro" id="IPR046346">
    <property type="entry name" value="Aminoacid_DH-like_N_sf"/>
</dbReference>
<dbReference type="InterPro" id="IPR036291">
    <property type="entry name" value="NAD(P)-bd_dom_sf"/>
</dbReference>
<dbReference type="InterPro" id="IPR000672">
    <property type="entry name" value="THF_DH/CycHdrlase"/>
</dbReference>
<dbReference type="InterPro" id="IPR020630">
    <property type="entry name" value="THF_DH/CycHdrlase_cat_dom"/>
</dbReference>
<dbReference type="InterPro" id="IPR020867">
    <property type="entry name" value="THF_DH/CycHdrlase_CS"/>
</dbReference>
<dbReference type="InterPro" id="IPR020631">
    <property type="entry name" value="THF_DH/CycHdrlase_NAD-bd_dom"/>
</dbReference>
<dbReference type="NCBIfam" id="NF010778">
    <property type="entry name" value="PRK14181.1"/>
    <property type="match status" value="1"/>
</dbReference>
<dbReference type="PANTHER" id="PTHR48099:SF5">
    <property type="entry name" value="C-1-TETRAHYDROFOLATE SYNTHASE, CYTOPLASMIC"/>
    <property type="match status" value="1"/>
</dbReference>
<dbReference type="PANTHER" id="PTHR48099">
    <property type="entry name" value="C-1-TETRAHYDROFOLATE SYNTHASE, CYTOPLASMIC-RELATED"/>
    <property type="match status" value="1"/>
</dbReference>
<dbReference type="Pfam" id="PF00763">
    <property type="entry name" value="THF_DHG_CYH"/>
    <property type="match status" value="1"/>
</dbReference>
<dbReference type="Pfam" id="PF02882">
    <property type="entry name" value="THF_DHG_CYH_C"/>
    <property type="match status" value="1"/>
</dbReference>
<dbReference type="PRINTS" id="PR00085">
    <property type="entry name" value="THFDHDRGNASE"/>
</dbReference>
<dbReference type="SUPFAM" id="SSF53223">
    <property type="entry name" value="Aminoacid dehydrogenase-like, N-terminal domain"/>
    <property type="match status" value="1"/>
</dbReference>
<dbReference type="SUPFAM" id="SSF51735">
    <property type="entry name" value="NAD(P)-binding Rossmann-fold domains"/>
    <property type="match status" value="1"/>
</dbReference>
<dbReference type="PROSITE" id="PS00766">
    <property type="entry name" value="THF_DHG_CYH_1"/>
    <property type="match status" value="1"/>
</dbReference>
<dbReference type="PROSITE" id="PS00767">
    <property type="entry name" value="THF_DHG_CYH_2"/>
    <property type="match status" value="1"/>
</dbReference>
<keyword id="KW-0028">Amino-acid biosynthesis</keyword>
<keyword id="KW-0368">Histidine biosynthesis</keyword>
<keyword id="KW-0378">Hydrolase</keyword>
<keyword id="KW-0486">Methionine biosynthesis</keyword>
<keyword id="KW-0511">Multifunctional enzyme</keyword>
<keyword id="KW-0521">NADP</keyword>
<keyword id="KW-0554">One-carbon metabolism</keyword>
<keyword id="KW-0560">Oxidoreductase</keyword>
<keyword id="KW-0658">Purine biosynthesis</keyword>
<feature type="chain" id="PRO_0000199304" description="Bifunctional protein FolD">
    <location>
        <begin position="1"/>
        <end position="286"/>
    </location>
</feature>
<feature type="binding site" evidence="1">
    <location>
        <begin position="160"/>
        <end position="162"/>
    </location>
    <ligand>
        <name>NADP(+)</name>
        <dbReference type="ChEBI" id="CHEBI:58349"/>
    </ligand>
</feature>
<feature type="binding site" evidence="1">
    <location>
        <position position="189"/>
    </location>
    <ligand>
        <name>NADP(+)</name>
        <dbReference type="ChEBI" id="CHEBI:58349"/>
    </ligand>
</feature>
<feature type="binding site" evidence="1">
    <location>
        <position position="230"/>
    </location>
    <ligand>
        <name>NADP(+)</name>
        <dbReference type="ChEBI" id="CHEBI:58349"/>
    </ligand>
</feature>
<organism>
    <name type="scientific">Chlamydia pneumoniae</name>
    <name type="common">Chlamydophila pneumoniae</name>
    <dbReference type="NCBI Taxonomy" id="83558"/>
    <lineage>
        <taxon>Bacteria</taxon>
        <taxon>Pseudomonadati</taxon>
        <taxon>Chlamydiota</taxon>
        <taxon>Chlamydiia</taxon>
        <taxon>Chlamydiales</taxon>
        <taxon>Chlamydiaceae</taxon>
        <taxon>Chlamydia/Chlamydophila group</taxon>
        <taxon>Chlamydia</taxon>
    </lineage>
</organism>
<gene>
    <name evidence="1" type="primary">folD</name>
    <name type="ordered locus">CPn_0335</name>
    <name type="ordered locus">CP_0423</name>
    <name type="ordered locus">CpB0344</name>
</gene>
<name>FOLD_CHLPN</name>
<protein>
    <recommendedName>
        <fullName evidence="1">Bifunctional protein FolD</fullName>
    </recommendedName>
    <domain>
        <recommendedName>
            <fullName evidence="1">Methylenetetrahydrofolate dehydrogenase</fullName>
            <ecNumber evidence="1">1.5.1.5</ecNumber>
        </recommendedName>
    </domain>
    <domain>
        <recommendedName>
            <fullName evidence="1">Methenyltetrahydrofolate cyclohydrolase</fullName>
            <ecNumber evidence="1">3.5.4.9</ecNumber>
        </recommendedName>
    </domain>
</protein>
<sequence length="286" mass="30632">MLLRGIPAAEKILQRLKEEISQSPTSPGLAVVLIGNDPASEVYVGMKVKKATEIGIISKAHKLPSDSTLSSVLKLIERLNQDPSIHGILVQLPLPKHLDSEVILQAISPDKDVDGLHPVNMGKLLLGNFDGLLPCTPAGIIELLNYYEIPLRGRHAAIVGRSNIVGKPLAALMMQKHPQTNCTVTVLHSQSENLPEILKTADIIIAALGAPLFIKETMVAPHAVIVDVGTTRVPADNAKGYTLLGDVDFNNVVTKCAAITPVPGGVGPMTVAMLMSNTWRCYQNFS</sequence>
<proteinExistence type="inferred from homology"/>
<comment type="function">
    <text evidence="1">Catalyzes the oxidation of 5,10-methylenetetrahydrofolate to 5,10-methenyltetrahydrofolate and then the hydrolysis of 5,10-methenyltetrahydrofolate to 10-formyltetrahydrofolate.</text>
</comment>
<comment type="catalytic activity">
    <reaction evidence="1">
        <text>(6R)-5,10-methylene-5,6,7,8-tetrahydrofolate + NADP(+) = (6R)-5,10-methenyltetrahydrofolate + NADPH</text>
        <dbReference type="Rhea" id="RHEA:22812"/>
        <dbReference type="ChEBI" id="CHEBI:15636"/>
        <dbReference type="ChEBI" id="CHEBI:57455"/>
        <dbReference type="ChEBI" id="CHEBI:57783"/>
        <dbReference type="ChEBI" id="CHEBI:58349"/>
        <dbReference type="EC" id="1.5.1.5"/>
    </reaction>
</comment>
<comment type="catalytic activity">
    <reaction evidence="1">
        <text>(6R)-5,10-methenyltetrahydrofolate + H2O = (6R)-10-formyltetrahydrofolate + H(+)</text>
        <dbReference type="Rhea" id="RHEA:23700"/>
        <dbReference type="ChEBI" id="CHEBI:15377"/>
        <dbReference type="ChEBI" id="CHEBI:15378"/>
        <dbReference type="ChEBI" id="CHEBI:57455"/>
        <dbReference type="ChEBI" id="CHEBI:195366"/>
        <dbReference type="EC" id="3.5.4.9"/>
    </reaction>
</comment>
<comment type="pathway">
    <text evidence="1">One-carbon metabolism; tetrahydrofolate interconversion.</text>
</comment>
<comment type="subunit">
    <text evidence="1">Homodimer.</text>
</comment>
<comment type="similarity">
    <text evidence="1">Belongs to the tetrahydrofolate dehydrogenase/cyclohydrolase family.</text>
</comment>